<accession>Q48VF4</accession>
<proteinExistence type="inferred from homology"/>
<name>GPDA_STRPM</name>
<protein>
    <recommendedName>
        <fullName evidence="1">Glycerol-3-phosphate dehydrogenase [NAD(P)+]</fullName>
        <ecNumber evidence="1">1.1.1.94</ecNumber>
    </recommendedName>
    <alternativeName>
        <fullName evidence="1">NAD(P)(+)-dependent glycerol-3-phosphate dehydrogenase</fullName>
    </alternativeName>
    <alternativeName>
        <fullName evidence="1">NAD(P)H-dependent dihydroxyacetone-phosphate reductase</fullName>
    </alternativeName>
</protein>
<sequence>MTKQKVAILGPGSWGTALSQVLNDNGHDVRLWGNIPDQIEEINTKHTNRHYFKDIVLDKNITATLDLGQALSDVDAVLFVVPTKVTRLVARQVAAILDHKVVVMHASKGLEPETHERLSTILEEEIPAHFRSEVVVVSGPSHAEETIVRDITLITAASKDIEAAKYVQSLFSNHYFRLYTNTDVIGVETAGALKNIIAVGAGALHGLGYGDNAKAAVITRGLAEITRLGVKLGADPLTYSGLSGVGDLIVTGTSVHSRNWRAGAALGRGEKLEDIEHNMGMVIEGIATTKVAYEIAQDLGVYMPITTAIYKSIYEGADIKESILGMMSNEFRSENEWH</sequence>
<reference key="1">
    <citation type="journal article" date="2005" name="J. Infect. Dis.">
        <title>Genome sequence of a serotype M28 strain of group A Streptococcus: potential new insights into puerperal sepsis and bacterial disease specificity.</title>
        <authorList>
            <person name="Green N.M."/>
            <person name="Zhang S."/>
            <person name="Porcella S.F."/>
            <person name="Nagiec M.J."/>
            <person name="Barbian K.D."/>
            <person name="Beres S.B."/>
            <person name="Lefebvre R.B."/>
            <person name="Musser J.M."/>
        </authorList>
    </citation>
    <scope>NUCLEOTIDE SEQUENCE [LARGE SCALE GENOMIC DNA]</scope>
    <source>
        <strain>MGAS6180</strain>
    </source>
</reference>
<evidence type="ECO:0000255" key="1">
    <source>
        <dbReference type="HAMAP-Rule" id="MF_00394"/>
    </source>
</evidence>
<keyword id="KW-0963">Cytoplasm</keyword>
<keyword id="KW-0444">Lipid biosynthesis</keyword>
<keyword id="KW-0443">Lipid metabolism</keyword>
<keyword id="KW-0520">NAD</keyword>
<keyword id="KW-0521">NADP</keyword>
<keyword id="KW-0547">Nucleotide-binding</keyword>
<keyword id="KW-0560">Oxidoreductase</keyword>
<keyword id="KW-0594">Phospholipid biosynthesis</keyword>
<keyword id="KW-1208">Phospholipid metabolism</keyword>
<comment type="function">
    <text evidence="1">Catalyzes the reduction of the glycolytic intermediate dihydroxyacetone phosphate (DHAP) to sn-glycerol 3-phosphate (G3P), the key precursor for phospholipid synthesis.</text>
</comment>
<comment type="catalytic activity">
    <reaction evidence="1">
        <text>sn-glycerol 3-phosphate + NAD(+) = dihydroxyacetone phosphate + NADH + H(+)</text>
        <dbReference type="Rhea" id="RHEA:11092"/>
        <dbReference type="ChEBI" id="CHEBI:15378"/>
        <dbReference type="ChEBI" id="CHEBI:57540"/>
        <dbReference type="ChEBI" id="CHEBI:57597"/>
        <dbReference type="ChEBI" id="CHEBI:57642"/>
        <dbReference type="ChEBI" id="CHEBI:57945"/>
        <dbReference type="EC" id="1.1.1.94"/>
    </reaction>
    <physiologicalReaction direction="right-to-left" evidence="1">
        <dbReference type="Rhea" id="RHEA:11094"/>
    </physiologicalReaction>
</comment>
<comment type="catalytic activity">
    <reaction evidence="1">
        <text>sn-glycerol 3-phosphate + NADP(+) = dihydroxyacetone phosphate + NADPH + H(+)</text>
        <dbReference type="Rhea" id="RHEA:11096"/>
        <dbReference type="ChEBI" id="CHEBI:15378"/>
        <dbReference type="ChEBI" id="CHEBI:57597"/>
        <dbReference type="ChEBI" id="CHEBI:57642"/>
        <dbReference type="ChEBI" id="CHEBI:57783"/>
        <dbReference type="ChEBI" id="CHEBI:58349"/>
        <dbReference type="EC" id="1.1.1.94"/>
    </reaction>
    <physiologicalReaction direction="right-to-left" evidence="1">
        <dbReference type="Rhea" id="RHEA:11098"/>
    </physiologicalReaction>
</comment>
<comment type="pathway">
    <text evidence="1">Membrane lipid metabolism; glycerophospholipid metabolism.</text>
</comment>
<comment type="subcellular location">
    <subcellularLocation>
        <location evidence="1">Cytoplasm</location>
    </subcellularLocation>
</comment>
<comment type="similarity">
    <text evidence="1">Belongs to the NAD-dependent glycerol-3-phosphate dehydrogenase family.</text>
</comment>
<dbReference type="EC" id="1.1.1.94" evidence="1"/>
<dbReference type="EMBL" id="CP000056">
    <property type="protein sequence ID" value="AAX71302.1"/>
    <property type="molecule type" value="Genomic_DNA"/>
</dbReference>
<dbReference type="RefSeq" id="WP_011284483.1">
    <property type="nucleotide sequence ID" value="NC_007296.2"/>
</dbReference>
<dbReference type="SMR" id="Q48VF4"/>
<dbReference type="KEGG" id="spb:M28_Spy0188"/>
<dbReference type="HOGENOM" id="CLU_033449_0_2_9"/>
<dbReference type="UniPathway" id="UPA00940"/>
<dbReference type="GO" id="GO:0005829">
    <property type="term" value="C:cytosol"/>
    <property type="evidence" value="ECO:0007669"/>
    <property type="project" value="TreeGrafter"/>
</dbReference>
<dbReference type="GO" id="GO:0047952">
    <property type="term" value="F:glycerol-3-phosphate dehydrogenase [NAD(P)+] activity"/>
    <property type="evidence" value="ECO:0007669"/>
    <property type="project" value="UniProtKB-UniRule"/>
</dbReference>
<dbReference type="GO" id="GO:0051287">
    <property type="term" value="F:NAD binding"/>
    <property type="evidence" value="ECO:0007669"/>
    <property type="project" value="InterPro"/>
</dbReference>
<dbReference type="GO" id="GO:0005975">
    <property type="term" value="P:carbohydrate metabolic process"/>
    <property type="evidence" value="ECO:0007669"/>
    <property type="project" value="InterPro"/>
</dbReference>
<dbReference type="GO" id="GO:0046167">
    <property type="term" value="P:glycerol-3-phosphate biosynthetic process"/>
    <property type="evidence" value="ECO:0007669"/>
    <property type="project" value="UniProtKB-UniRule"/>
</dbReference>
<dbReference type="GO" id="GO:0046168">
    <property type="term" value="P:glycerol-3-phosphate catabolic process"/>
    <property type="evidence" value="ECO:0007669"/>
    <property type="project" value="InterPro"/>
</dbReference>
<dbReference type="GO" id="GO:0006650">
    <property type="term" value="P:glycerophospholipid metabolic process"/>
    <property type="evidence" value="ECO:0007669"/>
    <property type="project" value="UniProtKB-UniRule"/>
</dbReference>
<dbReference type="GO" id="GO:0008654">
    <property type="term" value="P:phospholipid biosynthetic process"/>
    <property type="evidence" value="ECO:0007669"/>
    <property type="project" value="UniProtKB-KW"/>
</dbReference>
<dbReference type="FunFam" id="1.10.1040.10:FF:000001">
    <property type="entry name" value="Glycerol-3-phosphate dehydrogenase [NAD(P)+]"/>
    <property type="match status" value="1"/>
</dbReference>
<dbReference type="FunFam" id="3.40.50.720:FF:000019">
    <property type="entry name" value="Glycerol-3-phosphate dehydrogenase [NAD(P)+]"/>
    <property type="match status" value="1"/>
</dbReference>
<dbReference type="Gene3D" id="1.10.1040.10">
    <property type="entry name" value="N-(1-d-carboxylethyl)-l-norvaline Dehydrogenase, domain 2"/>
    <property type="match status" value="1"/>
</dbReference>
<dbReference type="Gene3D" id="3.40.50.720">
    <property type="entry name" value="NAD(P)-binding Rossmann-like Domain"/>
    <property type="match status" value="1"/>
</dbReference>
<dbReference type="HAMAP" id="MF_00394">
    <property type="entry name" value="NAD_Glyc3P_dehydrog"/>
    <property type="match status" value="1"/>
</dbReference>
<dbReference type="InterPro" id="IPR008927">
    <property type="entry name" value="6-PGluconate_DH-like_C_sf"/>
</dbReference>
<dbReference type="InterPro" id="IPR013328">
    <property type="entry name" value="6PGD_dom2"/>
</dbReference>
<dbReference type="InterPro" id="IPR006168">
    <property type="entry name" value="G3P_DH_NAD-dep"/>
</dbReference>
<dbReference type="InterPro" id="IPR006109">
    <property type="entry name" value="G3P_DH_NAD-dep_C"/>
</dbReference>
<dbReference type="InterPro" id="IPR011128">
    <property type="entry name" value="G3P_DH_NAD-dep_N"/>
</dbReference>
<dbReference type="InterPro" id="IPR036291">
    <property type="entry name" value="NAD(P)-bd_dom_sf"/>
</dbReference>
<dbReference type="NCBIfam" id="NF000940">
    <property type="entry name" value="PRK00094.1-2"/>
    <property type="match status" value="1"/>
</dbReference>
<dbReference type="NCBIfam" id="NF000941">
    <property type="entry name" value="PRK00094.1-3"/>
    <property type="match status" value="1"/>
</dbReference>
<dbReference type="NCBIfam" id="NF000942">
    <property type="entry name" value="PRK00094.1-4"/>
    <property type="match status" value="1"/>
</dbReference>
<dbReference type="PANTHER" id="PTHR11728">
    <property type="entry name" value="GLYCEROL-3-PHOSPHATE DEHYDROGENASE"/>
    <property type="match status" value="1"/>
</dbReference>
<dbReference type="PANTHER" id="PTHR11728:SF1">
    <property type="entry name" value="GLYCEROL-3-PHOSPHATE DEHYDROGENASE [NAD(+)] 2, CHLOROPLASTIC"/>
    <property type="match status" value="1"/>
</dbReference>
<dbReference type="Pfam" id="PF07479">
    <property type="entry name" value="NAD_Gly3P_dh_C"/>
    <property type="match status" value="1"/>
</dbReference>
<dbReference type="Pfam" id="PF01210">
    <property type="entry name" value="NAD_Gly3P_dh_N"/>
    <property type="match status" value="1"/>
</dbReference>
<dbReference type="PIRSF" id="PIRSF000114">
    <property type="entry name" value="Glycerol-3-P_dh"/>
    <property type="match status" value="1"/>
</dbReference>
<dbReference type="PRINTS" id="PR00077">
    <property type="entry name" value="GPDHDRGNASE"/>
</dbReference>
<dbReference type="SUPFAM" id="SSF48179">
    <property type="entry name" value="6-phosphogluconate dehydrogenase C-terminal domain-like"/>
    <property type="match status" value="1"/>
</dbReference>
<dbReference type="SUPFAM" id="SSF51735">
    <property type="entry name" value="NAD(P)-binding Rossmann-fold domains"/>
    <property type="match status" value="1"/>
</dbReference>
<dbReference type="PROSITE" id="PS00957">
    <property type="entry name" value="NAD_G3PDH"/>
    <property type="match status" value="1"/>
</dbReference>
<organism>
    <name type="scientific">Streptococcus pyogenes serotype M28 (strain MGAS6180)</name>
    <dbReference type="NCBI Taxonomy" id="319701"/>
    <lineage>
        <taxon>Bacteria</taxon>
        <taxon>Bacillati</taxon>
        <taxon>Bacillota</taxon>
        <taxon>Bacilli</taxon>
        <taxon>Lactobacillales</taxon>
        <taxon>Streptococcaceae</taxon>
        <taxon>Streptococcus</taxon>
    </lineage>
</organism>
<feature type="chain" id="PRO_0000255383" description="Glycerol-3-phosphate dehydrogenase [NAD(P)+]">
    <location>
        <begin position="1"/>
        <end position="338"/>
    </location>
</feature>
<feature type="active site" description="Proton acceptor" evidence="1">
    <location>
        <position position="194"/>
    </location>
</feature>
<feature type="binding site" evidence="1">
    <location>
        <position position="13"/>
    </location>
    <ligand>
        <name>NADPH</name>
        <dbReference type="ChEBI" id="CHEBI:57783"/>
    </ligand>
</feature>
<feature type="binding site" evidence="1">
    <location>
        <position position="14"/>
    </location>
    <ligand>
        <name>NADPH</name>
        <dbReference type="ChEBI" id="CHEBI:57783"/>
    </ligand>
</feature>
<feature type="binding site" evidence="1">
    <location>
        <position position="108"/>
    </location>
    <ligand>
        <name>NADPH</name>
        <dbReference type="ChEBI" id="CHEBI:57783"/>
    </ligand>
</feature>
<feature type="binding site" evidence="1">
    <location>
        <position position="108"/>
    </location>
    <ligand>
        <name>sn-glycerol 3-phosphate</name>
        <dbReference type="ChEBI" id="CHEBI:57597"/>
    </ligand>
</feature>
<feature type="binding site" evidence="1">
    <location>
        <position position="139"/>
    </location>
    <ligand>
        <name>sn-glycerol 3-phosphate</name>
        <dbReference type="ChEBI" id="CHEBI:57597"/>
    </ligand>
</feature>
<feature type="binding site" evidence="1">
    <location>
        <position position="141"/>
    </location>
    <ligand>
        <name>sn-glycerol 3-phosphate</name>
        <dbReference type="ChEBI" id="CHEBI:57597"/>
    </ligand>
</feature>
<feature type="binding site" evidence="1">
    <location>
        <position position="143"/>
    </location>
    <ligand>
        <name>NADPH</name>
        <dbReference type="ChEBI" id="CHEBI:57783"/>
    </ligand>
</feature>
<feature type="binding site" evidence="1">
    <location>
        <position position="194"/>
    </location>
    <ligand>
        <name>sn-glycerol 3-phosphate</name>
        <dbReference type="ChEBI" id="CHEBI:57597"/>
    </ligand>
</feature>
<feature type="binding site" evidence="1">
    <location>
        <position position="247"/>
    </location>
    <ligand>
        <name>sn-glycerol 3-phosphate</name>
        <dbReference type="ChEBI" id="CHEBI:57597"/>
    </ligand>
</feature>
<feature type="binding site" evidence="1">
    <location>
        <position position="257"/>
    </location>
    <ligand>
        <name>sn-glycerol 3-phosphate</name>
        <dbReference type="ChEBI" id="CHEBI:57597"/>
    </ligand>
</feature>
<feature type="binding site" evidence="1">
    <location>
        <position position="258"/>
    </location>
    <ligand>
        <name>NADPH</name>
        <dbReference type="ChEBI" id="CHEBI:57783"/>
    </ligand>
</feature>
<feature type="binding site" evidence="1">
    <location>
        <position position="258"/>
    </location>
    <ligand>
        <name>sn-glycerol 3-phosphate</name>
        <dbReference type="ChEBI" id="CHEBI:57597"/>
    </ligand>
</feature>
<feature type="binding site" evidence="1">
    <location>
        <position position="259"/>
    </location>
    <ligand>
        <name>sn-glycerol 3-phosphate</name>
        <dbReference type="ChEBI" id="CHEBI:57597"/>
    </ligand>
</feature>
<feature type="binding site" evidence="1">
    <location>
        <position position="282"/>
    </location>
    <ligand>
        <name>NADPH</name>
        <dbReference type="ChEBI" id="CHEBI:57783"/>
    </ligand>
</feature>
<feature type="binding site" evidence="1">
    <location>
        <position position="284"/>
    </location>
    <ligand>
        <name>NADPH</name>
        <dbReference type="ChEBI" id="CHEBI:57783"/>
    </ligand>
</feature>
<gene>
    <name evidence="1" type="primary">gpsA</name>
    <name type="ordered locus">M28_Spy0188</name>
</gene>